<gene>
    <name evidence="4" type="primary">ATP5F1A</name>
    <name type="synonym">ATP5A1</name>
    <name type="synonym">ATP5A2</name>
</gene>
<reference key="1">
    <citation type="submission" date="2008-04" db="EMBL/GenBank/DDBJ databases">
        <authorList>
            <person name="Liu G.Y."/>
        </authorList>
    </citation>
    <scope>NUCLEOTIDE SEQUENCE [MRNA]</scope>
</reference>
<reference key="2">
    <citation type="journal article" date="1996" name="Mamm. Genome">
        <title>Evaluation and characterization of a porcine small intestine cDNA library: analysis of 839 clones.</title>
        <authorList>
            <person name="Winteroe A.K."/>
            <person name="Fredholm M."/>
            <person name="Davies W."/>
        </authorList>
    </citation>
    <scope>NUCLEOTIDE SEQUENCE [LARGE SCALE MRNA] OF 1-148</scope>
    <source>
        <tissue>Small intestine</tissue>
    </source>
</reference>
<reference key="3">
    <citation type="journal article" date="1991" name="Eur. J. Biochem.">
        <title>Localization on the mitochondrial F1 ATPase alpha subunit of an epitope masked in the membrane-bound enzyme using a monoclonal antibody and synthetic peptides.</title>
        <authorList>
            <person name="Moradi-Ameli M."/>
            <person name="Clerc F.F."/>
            <person name="Cieur F."/>
            <person name="Seiberras G."/>
            <person name="Godinot C."/>
        </authorList>
    </citation>
    <scope>PROTEIN SEQUENCE OF 88-112 AND 127-133</scope>
    <scope>SUBCELLULAR LOCATION</scope>
    <scope>SUBUNIT</scope>
    <scope>TISSUE SPECIFICITY</scope>
</reference>
<proteinExistence type="evidence at protein level"/>
<protein>
    <recommendedName>
        <fullName evidence="4">ATP synthase F(1) complex subunit alpha, mitochondrial</fullName>
    </recommendedName>
    <alternativeName>
        <fullName evidence="4">ATP synthase F1 subunit alpha</fullName>
    </alternativeName>
    <alternativeName>
        <fullName>ATP synthase subunit alpha heart isoform, mitochondrial</fullName>
    </alternativeName>
    <alternativeName>
        <fullName>ATP synthase subunit alpha liver isoform, mitochondrial</fullName>
    </alternativeName>
</protein>
<evidence type="ECO:0000250" key="1"/>
<evidence type="ECO:0000250" key="2">
    <source>
        <dbReference type="UniProtKB" id="P15999"/>
    </source>
</evidence>
<evidence type="ECO:0000250" key="3">
    <source>
        <dbReference type="UniProtKB" id="P19483"/>
    </source>
</evidence>
<evidence type="ECO:0000250" key="4">
    <source>
        <dbReference type="UniProtKB" id="P25705"/>
    </source>
</evidence>
<evidence type="ECO:0000250" key="5">
    <source>
        <dbReference type="UniProtKB" id="Q03265"/>
    </source>
</evidence>
<evidence type="ECO:0000269" key="6">
    <source>
    </source>
</evidence>
<evidence type="ECO:0000305" key="7"/>
<evidence type="ECO:0007829" key="8">
    <source>
        <dbReference type="PDB" id="6J5I"/>
    </source>
</evidence>
<evidence type="ECO:0007829" key="9">
    <source>
        <dbReference type="PDB" id="6J5J"/>
    </source>
</evidence>
<keyword id="KW-0002">3D-structure</keyword>
<keyword id="KW-0007">Acetylation</keyword>
<keyword id="KW-0066">ATP synthesis</keyword>
<keyword id="KW-0067">ATP-binding</keyword>
<keyword id="KW-1003">Cell membrane</keyword>
<keyword id="KW-0139">CF(1)</keyword>
<keyword id="KW-0903">Direct protein sequencing</keyword>
<keyword id="KW-0325">Glycoprotein</keyword>
<keyword id="KW-0375">Hydrogen ion transport</keyword>
<keyword id="KW-0406">Ion transport</keyword>
<keyword id="KW-0460">Magnesium</keyword>
<keyword id="KW-0472">Membrane</keyword>
<keyword id="KW-0479">Metal-binding</keyword>
<keyword id="KW-0488">Methylation</keyword>
<keyword id="KW-0496">Mitochondrion</keyword>
<keyword id="KW-0999">Mitochondrion inner membrane</keyword>
<keyword id="KW-0547">Nucleotide-binding</keyword>
<keyword id="KW-0597">Phosphoprotein</keyword>
<keyword id="KW-1185">Reference proteome</keyword>
<keyword id="KW-0809">Transit peptide</keyword>
<keyword id="KW-0813">Transport</keyword>
<dbReference type="EMBL" id="EU650784">
    <property type="protein sequence ID" value="ACD02421.1"/>
    <property type="molecule type" value="mRNA"/>
</dbReference>
<dbReference type="EMBL" id="F14580">
    <property type="protein sequence ID" value="CAA23135.1"/>
    <property type="molecule type" value="mRNA"/>
</dbReference>
<dbReference type="RefSeq" id="NP_001172071.1">
    <property type="nucleotide sequence ID" value="NM_001185142.1"/>
</dbReference>
<dbReference type="PDB" id="6J5I">
    <property type="method" value="EM"/>
    <property type="resolution" value="3.34 A"/>
    <property type="chains" value="A/B/C=45-553"/>
</dbReference>
<dbReference type="PDB" id="6J5J">
    <property type="method" value="EM"/>
    <property type="resolution" value="3.45 A"/>
    <property type="chains" value="A/B/C=45-553"/>
</dbReference>
<dbReference type="PDB" id="6J5K">
    <property type="method" value="EM"/>
    <property type="resolution" value="6.20 A"/>
    <property type="chains" value="A/AA/AB/AC/B/BA/BB/BC/C/CA/CB/CC=45-553"/>
</dbReference>
<dbReference type="PDBsum" id="6J5I"/>
<dbReference type="PDBsum" id="6J5J"/>
<dbReference type="PDBsum" id="6J5K"/>
<dbReference type="BMRB" id="P80021"/>
<dbReference type="SMR" id="P80021"/>
<dbReference type="FunCoup" id="P80021">
    <property type="interactions" value="1833"/>
</dbReference>
<dbReference type="IntAct" id="P80021">
    <property type="interactions" value="1"/>
</dbReference>
<dbReference type="STRING" id="9823.ENSSSCP00000058679"/>
<dbReference type="GlyCosmos" id="P80021">
    <property type="glycosylation" value="1 site, No reported glycans"/>
</dbReference>
<dbReference type="GlyGen" id="P80021">
    <property type="glycosylation" value="1 site"/>
</dbReference>
<dbReference type="PaxDb" id="9823-ENSSSCP00000004854"/>
<dbReference type="PeptideAtlas" id="P80021"/>
<dbReference type="Ensembl" id="ENSSSCT00000056853.2">
    <property type="protein sequence ID" value="ENSSSCP00000037224.1"/>
    <property type="gene ID" value="ENSSSCG00000004499.5"/>
</dbReference>
<dbReference type="Ensembl" id="ENSSSCT00015002210.1">
    <property type="protein sequence ID" value="ENSSSCP00015000682.1"/>
    <property type="gene ID" value="ENSSSCG00015001140.1"/>
</dbReference>
<dbReference type="Ensembl" id="ENSSSCT00025068568.1">
    <property type="protein sequence ID" value="ENSSSCP00025029507.1"/>
    <property type="gene ID" value="ENSSSCG00025050081.1"/>
</dbReference>
<dbReference type="Ensembl" id="ENSSSCT00030005808.1">
    <property type="protein sequence ID" value="ENSSSCP00030002440.1"/>
    <property type="gene ID" value="ENSSSCG00030004377.1"/>
</dbReference>
<dbReference type="Ensembl" id="ENSSSCT00040026509.1">
    <property type="protein sequence ID" value="ENSSSCP00040011211.1"/>
    <property type="gene ID" value="ENSSSCG00040018805.1"/>
</dbReference>
<dbReference type="Ensembl" id="ENSSSCT00050022813.1">
    <property type="protein sequence ID" value="ENSSSCP00050009661.1"/>
    <property type="gene ID" value="ENSSSCG00050016724.1"/>
</dbReference>
<dbReference type="Ensembl" id="ENSSSCT00055036600.1">
    <property type="protein sequence ID" value="ENSSSCP00055029082.1"/>
    <property type="gene ID" value="ENSSSCG00055018686.1"/>
</dbReference>
<dbReference type="Ensembl" id="ENSSSCT00055037105.1">
    <property type="protein sequence ID" value="ENSSSCP00055029486.1"/>
    <property type="gene ID" value="ENSSSCG00055018686.1"/>
</dbReference>
<dbReference type="Ensembl" id="ENSSSCT00060053537.1">
    <property type="protein sequence ID" value="ENSSSCP00060022810.1"/>
    <property type="gene ID" value="ENSSSCG00060039559.1"/>
</dbReference>
<dbReference type="Ensembl" id="ENSSSCT00065032385.1">
    <property type="protein sequence ID" value="ENSSSCP00065013310.1"/>
    <property type="gene ID" value="ENSSSCG00065024259.1"/>
</dbReference>
<dbReference type="Ensembl" id="ENSSSCT00110030329">
    <property type="protein sequence ID" value="ENSSSCP00110020575"/>
    <property type="gene ID" value="ENSSSCG00110015832"/>
</dbReference>
<dbReference type="GeneID" id="100157880"/>
<dbReference type="KEGG" id="ssc:100157880"/>
<dbReference type="CTD" id="498"/>
<dbReference type="VGNC" id="VGNC:109475">
    <property type="gene designation" value="ATP5F1A"/>
</dbReference>
<dbReference type="eggNOG" id="KOG1353">
    <property type="taxonomic scope" value="Eukaryota"/>
</dbReference>
<dbReference type="GeneTree" id="ENSGT00550000074846"/>
<dbReference type="HOGENOM" id="CLU_010091_2_1_1"/>
<dbReference type="InParanoid" id="P80021"/>
<dbReference type="OrthoDB" id="9805536at2759"/>
<dbReference type="Reactome" id="R-SSC-163210">
    <property type="pathway name" value="Formation of ATP by chemiosmotic coupling"/>
</dbReference>
<dbReference type="Reactome" id="R-SSC-8949613">
    <property type="pathway name" value="Cristae formation"/>
</dbReference>
<dbReference type="Reactome" id="R-SSC-9837999">
    <property type="pathway name" value="Mitochondrial protein degradation"/>
</dbReference>
<dbReference type="Proteomes" id="UP000008227">
    <property type="component" value="Chromosome 1"/>
</dbReference>
<dbReference type="Proteomes" id="UP000314985">
    <property type="component" value="Unplaced"/>
</dbReference>
<dbReference type="Proteomes" id="UP000694570">
    <property type="component" value="Unplaced"/>
</dbReference>
<dbReference type="Proteomes" id="UP000694571">
    <property type="component" value="Unplaced"/>
</dbReference>
<dbReference type="Proteomes" id="UP000694720">
    <property type="component" value="Unplaced"/>
</dbReference>
<dbReference type="Proteomes" id="UP000694722">
    <property type="component" value="Unplaced"/>
</dbReference>
<dbReference type="Proteomes" id="UP000694723">
    <property type="component" value="Unplaced"/>
</dbReference>
<dbReference type="Proteomes" id="UP000694724">
    <property type="component" value="Unplaced"/>
</dbReference>
<dbReference type="Proteomes" id="UP000694725">
    <property type="component" value="Unplaced"/>
</dbReference>
<dbReference type="Proteomes" id="UP000694726">
    <property type="component" value="Unplaced"/>
</dbReference>
<dbReference type="Proteomes" id="UP000694727">
    <property type="component" value="Unplaced"/>
</dbReference>
<dbReference type="Proteomes" id="UP000694728">
    <property type="component" value="Unplaced"/>
</dbReference>
<dbReference type="Bgee" id="ENSSSCG00000004499">
    <property type="expression patterns" value="Expressed in psoas major muscle and 43 other cell types or tissues"/>
</dbReference>
<dbReference type="ExpressionAtlas" id="P80021">
    <property type="expression patterns" value="baseline and differential"/>
</dbReference>
<dbReference type="GO" id="GO:0005743">
    <property type="term" value="C:mitochondrial inner membrane"/>
    <property type="evidence" value="ECO:0007669"/>
    <property type="project" value="UniProtKB-SubCell"/>
</dbReference>
<dbReference type="GO" id="GO:0005886">
    <property type="term" value="C:plasma membrane"/>
    <property type="evidence" value="ECO:0007669"/>
    <property type="project" value="UniProtKB-SubCell"/>
</dbReference>
<dbReference type="GO" id="GO:0045259">
    <property type="term" value="C:proton-transporting ATP synthase complex"/>
    <property type="evidence" value="ECO:0000250"/>
    <property type="project" value="UniProtKB"/>
</dbReference>
<dbReference type="GO" id="GO:0043531">
    <property type="term" value="F:ADP binding"/>
    <property type="evidence" value="ECO:0000318"/>
    <property type="project" value="GO_Central"/>
</dbReference>
<dbReference type="GO" id="GO:0005524">
    <property type="term" value="F:ATP binding"/>
    <property type="evidence" value="ECO:0000318"/>
    <property type="project" value="GO_Central"/>
</dbReference>
<dbReference type="GO" id="GO:0046933">
    <property type="term" value="F:proton-transporting ATP synthase activity, rotational mechanism"/>
    <property type="evidence" value="ECO:0007669"/>
    <property type="project" value="InterPro"/>
</dbReference>
<dbReference type="GO" id="GO:0015986">
    <property type="term" value="P:proton motive force-driven ATP synthesis"/>
    <property type="evidence" value="ECO:0000250"/>
    <property type="project" value="UniProtKB"/>
</dbReference>
<dbReference type="CDD" id="cd18113">
    <property type="entry name" value="ATP-synt_F1_alpha_C"/>
    <property type="match status" value="1"/>
</dbReference>
<dbReference type="CDD" id="cd18116">
    <property type="entry name" value="ATP-synt_F1_alpha_N"/>
    <property type="match status" value="1"/>
</dbReference>
<dbReference type="CDD" id="cd01132">
    <property type="entry name" value="F1-ATPase_alpha_CD"/>
    <property type="match status" value="1"/>
</dbReference>
<dbReference type="FunFam" id="1.20.150.20:FF:000001">
    <property type="entry name" value="ATP synthase subunit alpha"/>
    <property type="match status" value="1"/>
</dbReference>
<dbReference type="FunFam" id="2.40.30.20:FF:000001">
    <property type="entry name" value="ATP synthase subunit alpha"/>
    <property type="match status" value="1"/>
</dbReference>
<dbReference type="FunFam" id="3.40.50.300:FF:002432">
    <property type="entry name" value="ATP synthase subunit alpha, mitochondrial"/>
    <property type="match status" value="1"/>
</dbReference>
<dbReference type="Gene3D" id="2.40.30.20">
    <property type="match status" value="1"/>
</dbReference>
<dbReference type="Gene3D" id="1.20.150.20">
    <property type="entry name" value="ATP synthase alpha/beta chain, C-terminal domain"/>
    <property type="match status" value="1"/>
</dbReference>
<dbReference type="Gene3D" id="3.40.50.300">
    <property type="entry name" value="P-loop containing nucleotide triphosphate hydrolases"/>
    <property type="match status" value="1"/>
</dbReference>
<dbReference type="HAMAP" id="MF_01346">
    <property type="entry name" value="ATP_synth_alpha_bact"/>
    <property type="match status" value="1"/>
</dbReference>
<dbReference type="InterPro" id="IPR023366">
    <property type="entry name" value="ATP_synth_asu-like_sf"/>
</dbReference>
<dbReference type="InterPro" id="IPR000793">
    <property type="entry name" value="ATP_synth_asu_C"/>
</dbReference>
<dbReference type="InterPro" id="IPR038376">
    <property type="entry name" value="ATP_synth_asu_C_sf"/>
</dbReference>
<dbReference type="InterPro" id="IPR033732">
    <property type="entry name" value="ATP_synth_F1_a_nt-bd_dom"/>
</dbReference>
<dbReference type="InterPro" id="IPR005294">
    <property type="entry name" value="ATP_synth_F1_asu"/>
</dbReference>
<dbReference type="InterPro" id="IPR020003">
    <property type="entry name" value="ATPase_a/bsu_AS"/>
</dbReference>
<dbReference type="InterPro" id="IPR004100">
    <property type="entry name" value="ATPase_F1/V1/A1_a/bsu_N"/>
</dbReference>
<dbReference type="InterPro" id="IPR036121">
    <property type="entry name" value="ATPase_F1/V1/A1_a/bsu_N_sf"/>
</dbReference>
<dbReference type="InterPro" id="IPR000194">
    <property type="entry name" value="ATPase_F1/V1/A1_a/bsu_nucl-bd"/>
</dbReference>
<dbReference type="InterPro" id="IPR027417">
    <property type="entry name" value="P-loop_NTPase"/>
</dbReference>
<dbReference type="NCBIfam" id="TIGR00962">
    <property type="entry name" value="atpA"/>
    <property type="match status" value="1"/>
</dbReference>
<dbReference type="NCBIfam" id="NF009884">
    <property type="entry name" value="PRK13343.1"/>
    <property type="match status" value="1"/>
</dbReference>
<dbReference type="PANTHER" id="PTHR48082">
    <property type="entry name" value="ATP SYNTHASE SUBUNIT ALPHA, MITOCHONDRIAL"/>
    <property type="match status" value="1"/>
</dbReference>
<dbReference type="PANTHER" id="PTHR48082:SF2">
    <property type="entry name" value="ATP SYNTHASE SUBUNIT ALPHA, MITOCHONDRIAL"/>
    <property type="match status" value="1"/>
</dbReference>
<dbReference type="Pfam" id="PF00006">
    <property type="entry name" value="ATP-synt_ab"/>
    <property type="match status" value="1"/>
</dbReference>
<dbReference type="Pfam" id="PF00306">
    <property type="entry name" value="ATP-synt_ab_C"/>
    <property type="match status" value="1"/>
</dbReference>
<dbReference type="Pfam" id="PF02874">
    <property type="entry name" value="ATP-synt_ab_N"/>
    <property type="match status" value="1"/>
</dbReference>
<dbReference type="PIRSF" id="PIRSF039088">
    <property type="entry name" value="F_ATPase_subunit_alpha"/>
    <property type="match status" value="1"/>
</dbReference>
<dbReference type="SUPFAM" id="SSF47917">
    <property type="entry name" value="C-terminal domain of alpha and beta subunits of F1 ATP synthase"/>
    <property type="match status" value="1"/>
</dbReference>
<dbReference type="SUPFAM" id="SSF50615">
    <property type="entry name" value="N-terminal domain of alpha and beta subunits of F1 ATP synthase"/>
    <property type="match status" value="1"/>
</dbReference>
<dbReference type="SUPFAM" id="SSF52540">
    <property type="entry name" value="P-loop containing nucleoside triphosphate hydrolases"/>
    <property type="match status" value="1"/>
</dbReference>
<dbReference type="PROSITE" id="PS00152">
    <property type="entry name" value="ATPASE_ALPHA_BETA"/>
    <property type="match status" value="1"/>
</dbReference>
<sequence>MLSVRVAAAVARALPRRAGLVSKNALGSSFVAARNLHASNTRLQKTGTAEVSSILEERILGADTSVDLEETGRVLSIGDGIARVHGLRNVQAEEMVEFSSGLKGMSLNLEPDNVGVVVFGNDKLIKEGDIVKRTGAIVDVPVGEELLGRVVDALGNAIDGKGPIGSKTRRRVGLKAPGIIPRISVREPMQTGIKAVDSLVPIGRGQRELIIGDRQTGKTSIAIDTIINQKRFNDGTDEKKKLYCIYVAIGQKRSTVAQLVKRLTDADAMKYTIVVSATASDAAPLQYLAPYSGCSMGEYFRDNGKHALIIYDDLSKQAVAYRQMSLLLRRPPGREAYPGDVFYLHSRLLERAAKMNDAFGGGSLTALPVIETQAGDVSAYIPTNVISITDGQIFLETELFYKGIRPAINVGLSVSRVGSAAQTRAMKQVAGTMKLELAQYREVAAFAQFGSDLDAATQQLLSRGVRLTELLKQGQYAPMAIEEQVAVIYAGVRGYLDKLEPSKITKFENAFLSHVISQHQALLGKIRADGKISEETDAKLKEIVTNFLAGFEA</sequence>
<comment type="function">
    <text evidence="3 4">Subunit alpha, of the mitochondrial membrane ATP synthase complex (F(1)F(0) ATP synthase or Complex V) that produces ATP from ADP in the presence of a proton gradient across the membrane which is generated by electron transport complexes of the respiratory chain. ATP synthase complex consist of a soluble F(1) head domain - the catalytic core - and a membrane F(1) domain - the membrane proton channel. These two domains are linked by a central stalk rotating inside the F(1) region and a stationary peripheral stalk. During catalysis, ATP synthesis in the catalytic domain of F(1) is coupled via a rotary mechanism of the central stalk subunits to proton translocation (By similarity). In vivo, can only synthesize ATP although its ATP hydrolase activity can be activated artificially in vitro (By similarity). With the catalytic subunit beta (ATP5F1B), forms the catalytic core in the F(1) domain. Subunit alpha does not bear the catalytic high-affinity ATP-binding sites (By similarity).</text>
</comment>
<comment type="subunit">
    <text evidence="2 4 5 6">Homotrimer. Component of the ATP synthase complex composed at least of ATP5F1A/subunit alpha, ATP5F1B/subunit beta, ATP5MC1/subunit c (homooctomer), MT-ATP6/subunit a, MT-ATP8/subunit 8, ATP5ME/subunit e, ATP5MF/subunit f, ATP5MG/subunit g, ATP5MK/subunit k, ATP5MJ/subunit j, ATP5F1C/subunit gamma, ATP5F1D/subunit delta, ATP5F1E/subunit epsilon, ATP5PF/subunit F6, ATP5PB/subunit b, ATP5PD/subunit d, ATP5PO/subunit OSCP (By similarity). ATP synthase complex consists of a soluble F(1) head domain (subunits alpha(3) and beta(3)) - the catalytic core - and a membrane F(0) domain - the membrane proton channel (subunits c, a, 8, e, f, g, k and j) (PubMed:1714390). These two domains are linked by a central stalk (subunits gamma, delta, and epsilon) rotating inside the F1 region and a stationary peripheral stalk (subunits F6, b, d, and OSCP) (PubMed:1714390). Interacts with ATPAF2. Interacts with HRG; the interaction occurs on the surface of T-cells and alters the cell morphology when associated with concanavalin (in vitro). Interacts with PLG (angiostatin peptide); the interaction inhibits most of the angiogenic properties of angiostatin. Interacts with BLOC1S1 (By similarity). Interacts with BCL2L1 isoform BCL-X(L); the interaction mediates the association of BCL2L1 isoform BCL-X(L) with the mitochondrial membrane F(1)F(0) ATP synthase and enhances neurons metabolic efficiency (By similarity). Interacts with CLN5 and PPT1. Interacts with S100A1; this interaction increases F1-ATPase activity (By similarity). Interacts with ABCB7; this interaction allows the regulation of cellular iron homeostasis and cellular reactive oxygen species (ROS) levels in cardiomyocytes (By similarity).</text>
</comment>
<comment type="subcellular location">
    <subcellularLocation>
        <location evidence="6">Mitochondrion</location>
    </subcellularLocation>
    <subcellularLocation>
        <location evidence="3">Mitochondrion inner membrane</location>
        <topology evidence="3">Peripheral membrane protein</topology>
        <orientation evidence="3">Matrix side</orientation>
    </subcellularLocation>
    <subcellularLocation>
        <location evidence="4">Cell membrane</location>
        <topology evidence="4">Peripheral membrane protein</topology>
        <orientation evidence="4">Extracellular side</orientation>
    </subcellularLocation>
    <text evidence="4">Colocalizes with HRG on the cell surface of T-cells.</text>
</comment>
<comment type="tissue specificity">
    <text evidence="6">Expressed in heart (at protein level).</text>
</comment>
<comment type="PTM">
    <text evidence="4">Acetylated on lysine residues. BLOC1S1 is required for acetylation.</text>
</comment>
<comment type="miscellaneous">
    <text evidence="4">The siderophore enterobactin (Ent) produced by enteric bacteria binds Fe(3+) and helps bacteria scavenge iron ions from the environment. As a consequence, the mammalian siderocalin LCN2 plays an important role in defense against bacterial infections by sequestering iron bound to microbial siderophores. LCN2 can also bind iron bound to endogenous or nutrient-derived iron chelators and plays an important role in cellular iron homeostasis. Enterobactin produced by non-pathogenic E.coli strains can facilitate mitochondrial iron assimilation, suggesting that iron bound to siderophores from non-pathogenic bacteria may contribute to iron absorption by the host.</text>
</comment>
<comment type="similarity">
    <text evidence="7">Belongs to the ATPase alpha/beta chains family.</text>
</comment>
<organism>
    <name type="scientific">Sus scrofa</name>
    <name type="common">Pig</name>
    <dbReference type="NCBI Taxonomy" id="9823"/>
    <lineage>
        <taxon>Eukaryota</taxon>
        <taxon>Metazoa</taxon>
        <taxon>Chordata</taxon>
        <taxon>Craniata</taxon>
        <taxon>Vertebrata</taxon>
        <taxon>Euteleostomi</taxon>
        <taxon>Mammalia</taxon>
        <taxon>Eutheria</taxon>
        <taxon>Laurasiatheria</taxon>
        <taxon>Artiodactyla</taxon>
        <taxon>Suina</taxon>
        <taxon>Suidae</taxon>
        <taxon>Sus</taxon>
    </lineage>
</organism>
<feature type="transit peptide" description="Mitochondrion" evidence="3">
    <location>
        <begin position="1"/>
        <end position="43"/>
    </location>
</feature>
<feature type="chain" id="PRO_0000144412" description="ATP synthase F(1) complex subunit alpha, mitochondrial">
    <location>
        <begin position="44"/>
        <end position="553"/>
    </location>
</feature>
<feature type="binding site" evidence="4">
    <location>
        <position position="215"/>
    </location>
    <ligand>
        <name>ATP</name>
        <dbReference type="ChEBI" id="CHEBI:30616"/>
        <note>ligand shared between homotrimeric partners</note>
    </ligand>
</feature>
<feature type="binding site" evidence="4">
    <location>
        <position position="217"/>
    </location>
    <ligand>
        <name>ATP</name>
        <dbReference type="ChEBI" id="CHEBI:30616"/>
        <note>ligand shared between homotrimeric partners</note>
    </ligand>
</feature>
<feature type="binding site" evidence="4">
    <location>
        <position position="218"/>
    </location>
    <ligand>
        <name>ATP</name>
        <dbReference type="ChEBI" id="CHEBI:30616"/>
        <note>ligand shared between homotrimeric partners</note>
    </ligand>
</feature>
<feature type="binding site" evidence="4">
    <location>
        <position position="219"/>
    </location>
    <ligand>
        <name>ATP</name>
        <dbReference type="ChEBI" id="CHEBI:30616"/>
        <note>ligand shared between homotrimeric partners</note>
    </ligand>
</feature>
<feature type="binding site" evidence="4">
    <location>
        <position position="219"/>
    </location>
    <ligand>
        <name>Mg(2+)</name>
        <dbReference type="ChEBI" id="CHEBI:18420"/>
        <note>ligand shared between homotrimeric partners</note>
    </ligand>
</feature>
<feature type="binding site" evidence="4">
    <location>
        <position position="220"/>
    </location>
    <ligand>
        <name>ATP</name>
        <dbReference type="ChEBI" id="CHEBI:30616"/>
        <note>ligand shared between homotrimeric partners</note>
    </ligand>
</feature>
<feature type="binding site" evidence="4">
    <location>
        <position position="312"/>
    </location>
    <ligand>
        <name>Mg(2+)</name>
        <dbReference type="ChEBI" id="CHEBI:18420"/>
        <note>ligand shared between homotrimeric partners</note>
    </ligand>
</feature>
<feature type="binding site" evidence="4">
    <location>
        <position position="473"/>
    </location>
    <ligand>
        <name>ATP</name>
        <dbReference type="ChEBI" id="CHEBI:30616"/>
        <note>ligand shared between homotrimeric partners</note>
    </ligand>
</feature>
<feature type="binding site" evidence="4">
    <location>
        <position position="475"/>
    </location>
    <ligand>
        <name>ATP</name>
        <dbReference type="ChEBI" id="CHEBI:30616"/>
        <note>ligand shared between homotrimeric partners</note>
    </ligand>
</feature>
<feature type="site" description="Required for activity" evidence="1">
    <location>
        <position position="413"/>
    </location>
</feature>
<feature type="modified residue" description="Phosphoserine" evidence="4">
    <location>
        <position position="53"/>
    </location>
</feature>
<feature type="modified residue" description="Phosphoserine" evidence="4">
    <location>
        <position position="65"/>
    </location>
</feature>
<feature type="modified residue" description="Phosphoserine; alternate" evidence="4">
    <location>
        <position position="76"/>
    </location>
</feature>
<feature type="modified residue" description="Phosphoserine" evidence="5">
    <location>
        <position position="106"/>
    </location>
</feature>
<feature type="modified residue" description="N6-acetyllysine" evidence="5">
    <location>
        <position position="123"/>
    </location>
</feature>
<feature type="modified residue" description="N6-acetyllysine" evidence="5">
    <location>
        <position position="126"/>
    </location>
</feature>
<feature type="modified residue" description="N6-acetyllysine" evidence="5">
    <location>
        <position position="132"/>
    </location>
</feature>
<feature type="modified residue" description="Phosphothreonine" evidence="2">
    <location>
        <position position="134"/>
    </location>
</feature>
<feature type="modified residue" description="N6-acetyllysine; alternate" evidence="4">
    <location>
        <position position="161"/>
    </location>
</feature>
<feature type="modified residue" description="N6-succinyllysine; alternate" evidence="5">
    <location>
        <position position="161"/>
    </location>
</feature>
<feature type="modified residue" description="Phosphoserine" evidence="4">
    <location>
        <position position="166"/>
    </location>
</feature>
<feature type="modified residue" description="N6-acetyllysine; alternate" evidence="5">
    <location>
        <position position="167"/>
    </location>
</feature>
<feature type="modified residue" description="N6-succinyllysine; alternate" evidence="5">
    <location>
        <position position="167"/>
    </location>
</feature>
<feature type="modified residue" description="Phosphoserine" evidence="4">
    <location>
        <position position="184"/>
    </location>
</feature>
<feature type="modified residue" description="Omega-N-methylarginine" evidence="5">
    <location>
        <position position="204"/>
    </location>
</feature>
<feature type="modified residue" description="N6-acetyllysine; alternate" evidence="5">
    <location>
        <position position="230"/>
    </location>
</feature>
<feature type="modified residue" description="N6-succinyllysine; alternate" evidence="5">
    <location>
        <position position="230"/>
    </location>
</feature>
<feature type="modified residue" description="N6-acetyllysine; alternate" evidence="5">
    <location>
        <position position="239"/>
    </location>
</feature>
<feature type="modified residue" description="N6-succinyllysine; alternate" evidence="5">
    <location>
        <position position="239"/>
    </location>
</feature>
<feature type="modified residue" description="N6-acetyllysine" evidence="5">
    <location>
        <position position="240"/>
    </location>
</feature>
<feature type="modified residue" description="N6-acetyllysine; alternate" evidence="4">
    <location>
        <position position="261"/>
    </location>
</feature>
<feature type="modified residue" description="N6-succinyllysine; alternate" evidence="5">
    <location>
        <position position="261"/>
    </location>
</feature>
<feature type="modified residue" description="N6-acetyllysine; alternate" evidence="5">
    <location>
        <position position="305"/>
    </location>
</feature>
<feature type="modified residue" description="N6-succinyllysine; alternate" evidence="5">
    <location>
        <position position="305"/>
    </location>
</feature>
<feature type="modified residue" description="N6-acetyllysine; alternate" evidence="5">
    <location>
        <position position="427"/>
    </location>
</feature>
<feature type="modified residue" description="N6-succinyllysine; alternate" evidence="5">
    <location>
        <position position="427"/>
    </location>
</feature>
<feature type="modified residue" description="N6-acetyllysine" evidence="4">
    <location>
        <position position="434"/>
    </location>
</feature>
<feature type="modified residue" description="N6-acetyllysine; alternate" evidence="4">
    <location>
        <position position="498"/>
    </location>
</feature>
<feature type="modified residue" description="N6-succinyllysine; alternate" evidence="5">
    <location>
        <position position="498"/>
    </location>
</feature>
<feature type="modified residue" description="N6-acetyllysine; alternate" evidence="4">
    <location>
        <position position="506"/>
    </location>
</feature>
<feature type="modified residue" description="N6-succinyllysine; alternate" evidence="5">
    <location>
        <position position="506"/>
    </location>
</feature>
<feature type="modified residue" description="N6-acetyllysine; alternate" evidence="5">
    <location>
        <position position="531"/>
    </location>
</feature>
<feature type="modified residue" description="N6-succinyllysine; alternate" evidence="5">
    <location>
        <position position="531"/>
    </location>
</feature>
<feature type="modified residue" description="N6-acetyllysine; alternate" evidence="4">
    <location>
        <position position="539"/>
    </location>
</feature>
<feature type="modified residue" description="N6-succinyllysine; alternate" evidence="5">
    <location>
        <position position="539"/>
    </location>
</feature>
<feature type="modified residue" description="N6-acetyllysine" evidence="5">
    <location>
        <position position="541"/>
    </location>
</feature>
<feature type="glycosylation site" description="O-linked (GlcNAc) serine; alternate" evidence="1">
    <location>
        <position position="76"/>
    </location>
</feature>
<feature type="sequence conflict" description="In Ref. 3; AA sequence." evidence="7" ref="3">
    <original>S</original>
    <variation>A</variation>
    <location>
        <position position="100"/>
    </location>
</feature>
<feature type="sequence conflict" description="In Ref. 2; CAA23135." evidence="7" ref="2">
    <original>EE</original>
    <variation>KD</variation>
    <location>
        <begin position="144"/>
        <end position="145"/>
    </location>
</feature>
<feature type="helix" evidence="8">
    <location>
        <begin position="54"/>
        <end position="60"/>
    </location>
</feature>
<feature type="strand" evidence="8">
    <location>
        <begin position="72"/>
        <end position="78"/>
    </location>
</feature>
<feature type="strand" evidence="8">
    <location>
        <begin position="81"/>
        <end position="85"/>
    </location>
</feature>
<feature type="strand" evidence="9">
    <location>
        <begin position="94"/>
        <end position="97"/>
    </location>
</feature>
<feature type="strand" evidence="9">
    <location>
        <begin position="99"/>
        <end position="101"/>
    </location>
</feature>
<feature type="strand" evidence="8">
    <location>
        <begin position="103"/>
        <end position="109"/>
    </location>
</feature>
<feature type="strand" evidence="8">
    <location>
        <begin position="114"/>
        <end position="120"/>
    </location>
</feature>
<feature type="strand" evidence="8">
    <location>
        <begin position="122"/>
        <end position="124"/>
    </location>
</feature>
<feature type="strand" evidence="8">
    <location>
        <begin position="131"/>
        <end position="133"/>
    </location>
</feature>
<feature type="strand" evidence="8">
    <location>
        <begin position="139"/>
        <end position="141"/>
    </location>
</feature>
<feature type="strand" evidence="8">
    <location>
        <begin position="143"/>
        <end position="146"/>
    </location>
</feature>
<feature type="strand" evidence="8">
    <location>
        <begin position="159"/>
        <end position="161"/>
    </location>
</feature>
<feature type="strand" evidence="8">
    <location>
        <begin position="169"/>
        <end position="171"/>
    </location>
</feature>
<feature type="turn" evidence="8">
    <location>
        <begin position="194"/>
        <end position="199"/>
    </location>
</feature>
<feature type="strand" evidence="8">
    <location>
        <begin position="203"/>
        <end position="205"/>
    </location>
</feature>
<feature type="strand" evidence="8">
    <location>
        <begin position="209"/>
        <end position="212"/>
    </location>
</feature>
<feature type="strand" evidence="8">
    <location>
        <begin position="214"/>
        <end position="218"/>
    </location>
</feature>
<feature type="turn" evidence="8">
    <location>
        <begin position="219"/>
        <end position="222"/>
    </location>
</feature>
<feature type="helix" evidence="8">
    <location>
        <begin position="224"/>
        <end position="227"/>
    </location>
</feature>
<feature type="helix" evidence="8">
    <location>
        <begin position="228"/>
        <end position="231"/>
    </location>
</feature>
<feature type="strand" evidence="8">
    <location>
        <begin position="233"/>
        <end position="236"/>
    </location>
</feature>
<feature type="helix" evidence="9">
    <location>
        <begin position="238"/>
        <end position="240"/>
    </location>
</feature>
<feature type="strand" evidence="8">
    <location>
        <begin position="244"/>
        <end position="250"/>
    </location>
</feature>
<feature type="helix" evidence="8">
    <location>
        <begin position="253"/>
        <end position="265"/>
    </location>
</feature>
<feature type="strand" evidence="8">
    <location>
        <begin position="270"/>
        <end position="277"/>
    </location>
</feature>
<feature type="strand" evidence="9">
    <location>
        <begin position="279"/>
        <end position="281"/>
    </location>
</feature>
<feature type="helix" evidence="8">
    <location>
        <begin position="285"/>
        <end position="288"/>
    </location>
</feature>
<feature type="helix" evidence="8">
    <location>
        <begin position="291"/>
        <end position="296"/>
    </location>
</feature>
<feature type="turn" evidence="8">
    <location>
        <begin position="297"/>
        <end position="304"/>
    </location>
</feature>
<feature type="strand" evidence="8">
    <location>
        <begin position="308"/>
        <end position="312"/>
    </location>
</feature>
<feature type="turn" evidence="8">
    <location>
        <begin position="314"/>
        <end position="316"/>
    </location>
</feature>
<feature type="helix" evidence="8">
    <location>
        <begin position="317"/>
        <end position="325"/>
    </location>
</feature>
<feature type="turn" evidence="8">
    <location>
        <begin position="326"/>
        <end position="329"/>
    </location>
</feature>
<feature type="helix" evidence="8">
    <location>
        <begin position="334"/>
        <end position="336"/>
    </location>
</feature>
<feature type="helix" evidence="8">
    <location>
        <begin position="339"/>
        <end position="341"/>
    </location>
</feature>
<feature type="helix" evidence="8">
    <location>
        <begin position="344"/>
        <end position="347"/>
    </location>
</feature>
<feature type="turn" evidence="8">
    <location>
        <begin position="357"/>
        <end position="360"/>
    </location>
</feature>
<feature type="strand" evidence="8">
    <location>
        <begin position="365"/>
        <end position="371"/>
    </location>
</feature>
<feature type="strand" evidence="8">
    <location>
        <begin position="373"/>
        <end position="375"/>
    </location>
</feature>
<feature type="helix" evidence="8">
    <location>
        <begin position="381"/>
        <end position="388"/>
    </location>
</feature>
<feature type="strand" evidence="8">
    <location>
        <begin position="389"/>
        <end position="395"/>
    </location>
</feature>
<feature type="turn" evidence="8">
    <location>
        <begin position="399"/>
        <end position="403"/>
    </location>
</feature>
<feature type="strand" evidence="8">
    <location>
        <begin position="408"/>
        <end position="417"/>
    </location>
</feature>
<feature type="helix" evidence="8">
    <location>
        <begin position="419"/>
        <end position="421"/>
    </location>
</feature>
<feature type="helix" evidence="8">
    <location>
        <begin position="426"/>
        <end position="442"/>
    </location>
</feature>
<feature type="strand" evidence="8">
    <location>
        <begin position="443"/>
        <end position="445"/>
    </location>
</feature>
<feature type="strand" evidence="8">
    <location>
        <begin position="451"/>
        <end position="453"/>
    </location>
</feature>
<feature type="helix" evidence="8">
    <location>
        <begin position="457"/>
        <end position="470"/>
    </location>
</feature>
<feature type="helix" evidence="8">
    <location>
        <begin position="481"/>
        <end position="491"/>
    </location>
</feature>
<feature type="turn" evidence="8">
    <location>
        <begin position="492"/>
        <end position="498"/>
    </location>
</feature>
<feature type="helix" evidence="8">
    <location>
        <begin position="504"/>
        <end position="517"/>
    </location>
</feature>
<feature type="turn" evidence="8">
    <location>
        <begin position="518"/>
        <end position="522"/>
    </location>
</feature>
<feature type="strand" evidence="8">
    <location>
        <begin position="523"/>
        <end position="526"/>
    </location>
</feature>
<feature type="turn" evidence="8">
    <location>
        <begin position="527"/>
        <end position="529"/>
    </location>
</feature>
<feature type="helix" evidence="8">
    <location>
        <begin position="534"/>
        <end position="537"/>
    </location>
</feature>
<feature type="helix" evidence="8">
    <location>
        <begin position="541"/>
        <end position="548"/>
    </location>
</feature>
<name>ATPA_PIG</name>
<accession>P80021</accession>
<accession>B2ZF46</accession>
<accession>Q29596</accession>